<organism>
    <name type="scientific">Zygosaccharomyces rouxii (strain ATCC 2623 / CBS 732 / NBRC 1130 / NCYC 568 / NRRL Y-229)</name>
    <dbReference type="NCBI Taxonomy" id="559307"/>
    <lineage>
        <taxon>Eukaryota</taxon>
        <taxon>Fungi</taxon>
        <taxon>Dikarya</taxon>
        <taxon>Ascomycota</taxon>
        <taxon>Saccharomycotina</taxon>
        <taxon>Saccharomycetes</taxon>
        <taxon>Saccharomycetales</taxon>
        <taxon>Saccharomycetaceae</taxon>
        <taxon>Zygosaccharomyces</taxon>
    </lineage>
</organism>
<feature type="transit peptide" description="Mitochondrion" evidence="2">
    <location>
        <begin position="1"/>
        <end status="unknown"/>
    </location>
</feature>
<feature type="chain" id="PRO_0000405521" description="Mitochondrial zinc maintenance protein 1, mitochondrial">
    <location>
        <begin status="unknown"/>
        <end position="119"/>
    </location>
</feature>
<protein>
    <recommendedName>
        <fullName>Mitochondrial zinc maintenance protein 1, mitochondrial</fullName>
    </recommendedName>
</protein>
<proteinExistence type="inferred from homology"/>
<reference key="1">
    <citation type="journal article" date="2009" name="Genome Res.">
        <title>Comparative genomics of protoploid Saccharomycetaceae.</title>
        <authorList>
            <consortium name="The Genolevures Consortium"/>
            <person name="Souciet J.-L."/>
            <person name="Dujon B."/>
            <person name="Gaillardin C."/>
            <person name="Johnston M."/>
            <person name="Baret P.V."/>
            <person name="Cliften P."/>
            <person name="Sherman D.J."/>
            <person name="Weissenbach J."/>
            <person name="Westhof E."/>
            <person name="Wincker P."/>
            <person name="Jubin C."/>
            <person name="Poulain J."/>
            <person name="Barbe V."/>
            <person name="Segurens B."/>
            <person name="Artiguenave F."/>
            <person name="Anthouard V."/>
            <person name="Vacherie B."/>
            <person name="Val M.-E."/>
            <person name="Fulton R.S."/>
            <person name="Minx P."/>
            <person name="Wilson R."/>
            <person name="Durrens P."/>
            <person name="Jean G."/>
            <person name="Marck C."/>
            <person name="Martin T."/>
            <person name="Nikolski M."/>
            <person name="Rolland T."/>
            <person name="Seret M.-L."/>
            <person name="Casaregola S."/>
            <person name="Despons L."/>
            <person name="Fairhead C."/>
            <person name="Fischer G."/>
            <person name="Lafontaine I."/>
            <person name="Leh V."/>
            <person name="Lemaire M."/>
            <person name="de Montigny J."/>
            <person name="Neuveglise C."/>
            <person name="Thierry A."/>
            <person name="Blanc-Lenfle I."/>
            <person name="Bleykasten C."/>
            <person name="Diffels J."/>
            <person name="Fritsch E."/>
            <person name="Frangeul L."/>
            <person name="Goeffon A."/>
            <person name="Jauniaux N."/>
            <person name="Kachouri-Lafond R."/>
            <person name="Payen C."/>
            <person name="Potier S."/>
            <person name="Pribylova L."/>
            <person name="Ozanne C."/>
            <person name="Richard G.-F."/>
            <person name="Sacerdot C."/>
            <person name="Straub M.-L."/>
            <person name="Talla E."/>
        </authorList>
    </citation>
    <scope>NUCLEOTIDE SEQUENCE [LARGE SCALE GENOMIC DNA]</scope>
    <source>
        <strain>ATCC 2623 / CBS 732 / BCRC 21506 / NBRC 1130 / NCYC 568 / NRRL Y-229</strain>
    </source>
</reference>
<name>MZM1_ZYGRC</name>
<sequence>MSLRQNALNAYRNGLRATRIAFGGDTRMLLASRAKMREGMENPPNPELSKEQQIKHLEDVATFLKRNLVQGRKEGTDEKYHLNIHKETELGDNESIKQTKKTLVSQGGGCCGGGKDLYK</sequence>
<gene>
    <name type="primary">MZM1</name>
    <name type="ordered locus">ZYRO0B06578g</name>
</gene>
<comment type="function">
    <text evidence="1">Assembly factor required for Rieske Fe-S protein RIP1 incorporation into the cytochrome b-c1 (CIII) complex. Functions as a chaperone, binding to this subunit within the mitochondrial matrix and stabilizing it prior to its translocation and insertion into the late CIII dimeric intermediate within the mitochondrial inner membrane. Modulates the mitochondrial matrix zinc pool (By similarity).</text>
</comment>
<comment type="subunit">
    <text evidence="1">Interacts with RIP1.</text>
</comment>
<comment type="subcellular location">
    <subcellularLocation>
        <location evidence="1">Mitochondrion matrix</location>
    </subcellularLocation>
</comment>
<comment type="similarity">
    <text evidence="3">Belongs to the complex I LYR family. MZM1 subfamily.</text>
</comment>
<evidence type="ECO:0000250" key="1"/>
<evidence type="ECO:0000255" key="2"/>
<evidence type="ECO:0000305" key="3"/>
<accession>C5DR94</accession>
<keyword id="KW-0143">Chaperone</keyword>
<keyword id="KW-0496">Mitochondrion</keyword>
<keyword id="KW-1185">Reference proteome</keyword>
<keyword id="KW-0809">Transit peptide</keyword>
<dbReference type="EMBL" id="CU928174">
    <property type="protein sequence ID" value="CAR26305.1"/>
    <property type="molecule type" value="Genomic_DNA"/>
</dbReference>
<dbReference type="RefSeq" id="XP_002495238.1">
    <property type="nucleotide sequence ID" value="XM_002495193.1"/>
</dbReference>
<dbReference type="SMR" id="C5DR94"/>
<dbReference type="FunCoup" id="C5DR94">
    <property type="interactions" value="28"/>
</dbReference>
<dbReference type="STRING" id="559307.C5DR94"/>
<dbReference type="GeneID" id="8202385"/>
<dbReference type="KEGG" id="zro:ZYRO0B06578g"/>
<dbReference type="HOGENOM" id="CLU_147114_2_2_1"/>
<dbReference type="InParanoid" id="C5DR94"/>
<dbReference type="Proteomes" id="UP000008536">
    <property type="component" value="Chromosome B"/>
</dbReference>
<dbReference type="GO" id="GO:0005759">
    <property type="term" value="C:mitochondrial matrix"/>
    <property type="evidence" value="ECO:0007669"/>
    <property type="project" value="UniProtKB-SubCell"/>
</dbReference>
<dbReference type="GO" id="GO:0044183">
    <property type="term" value="F:protein folding chaperone"/>
    <property type="evidence" value="ECO:0007669"/>
    <property type="project" value="TreeGrafter"/>
</dbReference>
<dbReference type="GO" id="GO:0034551">
    <property type="term" value="P:mitochondrial respiratory chain complex III assembly"/>
    <property type="evidence" value="ECO:0007669"/>
    <property type="project" value="InterPro"/>
</dbReference>
<dbReference type="CDD" id="cd20267">
    <property type="entry name" value="Complex1_LYR_LYRM7"/>
    <property type="match status" value="1"/>
</dbReference>
<dbReference type="InterPro" id="IPR045298">
    <property type="entry name" value="Complex1_LYR_LYRM7"/>
</dbReference>
<dbReference type="InterPro" id="IPR050435">
    <property type="entry name" value="MZM1/LYRM7"/>
</dbReference>
<dbReference type="PANTHER" id="PTHR46749">
    <property type="entry name" value="COMPLEX III ASSEMBLY FACTOR LYRM7"/>
    <property type="match status" value="1"/>
</dbReference>
<dbReference type="PANTHER" id="PTHR46749:SF1">
    <property type="entry name" value="COMPLEX III ASSEMBLY FACTOR LYRM7"/>
    <property type="match status" value="1"/>
</dbReference>